<proteinExistence type="inferred from homology"/>
<evidence type="ECO:0000255" key="1">
    <source>
        <dbReference type="PROSITE-ProRule" id="PRU00140"/>
    </source>
</evidence>
<evidence type="ECO:0000255" key="2">
    <source>
        <dbReference type="PROSITE-ProRule" id="PRU00284"/>
    </source>
</evidence>
<evidence type="ECO:0000305" key="3"/>
<reference key="1">
    <citation type="journal article" date="1996" name="FEMS Microbiol. Lett.">
        <title>A family of halobacterial transducer proteins.</title>
        <authorList>
            <person name="Rudolph J."/>
            <person name="Nordmann B."/>
            <person name="Storch K.F."/>
            <person name="Gruenberg H."/>
            <person name="Rodewald K."/>
            <person name="Oesterhelt D."/>
        </authorList>
    </citation>
    <scope>NUCLEOTIDE SEQUENCE [GENOMIC DNA]</scope>
    <source>
        <strain>R1 / S9</strain>
    </source>
</reference>
<reference key="2">
    <citation type="journal article" date="2000" name="Proc. Natl. Acad. Sci. U.S.A.">
        <title>Genome sequence of Halobacterium species NRC-1.</title>
        <authorList>
            <person name="Ng W.V."/>
            <person name="Kennedy S.P."/>
            <person name="Mahairas G.G."/>
            <person name="Berquist B."/>
            <person name="Pan M."/>
            <person name="Shukla H.D."/>
            <person name="Lasky S.R."/>
            <person name="Baliga N.S."/>
            <person name="Thorsson V."/>
            <person name="Sbrogna J."/>
            <person name="Swartzell S."/>
            <person name="Weir D."/>
            <person name="Hall J."/>
            <person name="Dahl T.A."/>
            <person name="Welti R."/>
            <person name="Goo Y.A."/>
            <person name="Leithauser B."/>
            <person name="Keller K."/>
            <person name="Cruz R."/>
            <person name="Danson M.J."/>
            <person name="Hough D.W."/>
            <person name="Maddocks D.G."/>
            <person name="Jablonski P.E."/>
            <person name="Krebs M.P."/>
            <person name="Angevine C.M."/>
            <person name="Dale H."/>
            <person name="Isenbarger T.A."/>
            <person name="Peck R.F."/>
            <person name="Pohlschroder M."/>
            <person name="Spudich J.L."/>
            <person name="Jung K.-H."/>
            <person name="Alam M."/>
            <person name="Freitas T."/>
            <person name="Hou S."/>
            <person name="Daniels C.J."/>
            <person name="Dennis P.P."/>
            <person name="Omer A.D."/>
            <person name="Ebhardt H."/>
            <person name="Lowe T.M."/>
            <person name="Liang P."/>
            <person name="Riley M."/>
            <person name="Hood L."/>
            <person name="DasSarma S."/>
        </authorList>
    </citation>
    <scope>NUCLEOTIDE SEQUENCE [LARGE SCALE GENOMIC DNA]</scope>
    <source>
        <strain>ATCC 700922 / JCM 11081 / NRC-1</strain>
    </source>
</reference>
<feature type="chain" id="PRO_0000110550" description="Halobacterial transducer protein 9">
    <location>
        <begin position="1"/>
        <end position="481"/>
    </location>
</feature>
<feature type="domain" description="PAS" evidence="1">
    <location>
        <begin position="10"/>
        <end position="81"/>
    </location>
</feature>
<feature type="domain" description="Methyl-accepting transducer" evidence="2">
    <location>
        <begin position="208"/>
        <end position="444"/>
    </location>
</feature>
<feature type="sequence conflict" description="In Ref. 1; CAA64840." evidence="3" ref="1">
    <original>E</original>
    <variation>V</variation>
    <location>
        <position position="341"/>
    </location>
</feature>
<feature type="sequence conflict" description="In Ref. 1; CAA64840." evidence="3" ref="1">
    <original>AM</original>
    <variation>TI</variation>
    <location>
        <begin position="466"/>
        <end position="467"/>
    </location>
</feature>
<dbReference type="EMBL" id="X95588">
    <property type="protein sequence ID" value="CAA64840.1"/>
    <property type="molecule type" value="Genomic_DNA"/>
</dbReference>
<dbReference type="EMBL" id="AE004437">
    <property type="protein sequence ID" value="AAG19717.1"/>
    <property type="molecule type" value="Genomic_DNA"/>
</dbReference>
<dbReference type="PIR" id="A84294">
    <property type="entry name" value="A84294"/>
</dbReference>
<dbReference type="RefSeq" id="WP_010903014.1">
    <property type="nucleotide sequence ID" value="NC_002607.1"/>
</dbReference>
<dbReference type="SMR" id="Q9HQ00"/>
<dbReference type="STRING" id="64091.VNG_1395G"/>
<dbReference type="PaxDb" id="64091-VNG_1395G"/>
<dbReference type="KEGG" id="hal:VNG_1395G"/>
<dbReference type="PATRIC" id="fig|64091.14.peg.1066"/>
<dbReference type="HOGENOM" id="CLU_000445_116_0_2"/>
<dbReference type="InParanoid" id="Q9HQ00"/>
<dbReference type="OrthoDB" id="116658at2157"/>
<dbReference type="PhylomeDB" id="Q9HQ00"/>
<dbReference type="Proteomes" id="UP000000554">
    <property type="component" value="Chromosome"/>
</dbReference>
<dbReference type="GO" id="GO:0005737">
    <property type="term" value="C:cytoplasm"/>
    <property type="evidence" value="ECO:0007669"/>
    <property type="project" value="UniProtKB-SubCell"/>
</dbReference>
<dbReference type="GO" id="GO:0016020">
    <property type="term" value="C:membrane"/>
    <property type="evidence" value="ECO:0007669"/>
    <property type="project" value="InterPro"/>
</dbReference>
<dbReference type="GO" id="GO:0004888">
    <property type="term" value="F:transmembrane signaling receptor activity"/>
    <property type="evidence" value="ECO:0007669"/>
    <property type="project" value="InterPro"/>
</dbReference>
<dbReference type="GO" id="GO:0006935">
    <property type="term" value="P:chemotaxis"/>
    <property type="evidence" value="ECO:0000318"/>
    <property type="project" value="GO_Central"/>
</dbReference>
<dbReference type="GO" id="GO:0007165">
    <property type="term" value="P:signal transduction"/>
    <property type="evidence" value="ECO:0007669"/>
    <property type="project" value="UniProtKB-KW"/>
</dbReference>
<dbReference type="CDD" id="cd11386">
    <property type="entry name" value="MCP_signal"/>
    <property type="match status" value="1"/>
</dbReference>
<dbReference type="Gene3D" id="1.10.287.950">
    <property type="entry name" value="Methyl-accepting chemotaxis protein"/>
    <property type="match status" value="1"/>
</dbReference>
<dbReference type="InterPro" id="IPR004090">
    <property type="entry name" value="Chemotax_Me-accpt_rcpt"/>
</dbReference>
<dbReference type="InterPro" id="IPR004089">
    <property type="entry name" value="MCPsignal_dom"/>
</dbReference>
<dbReference type="InterPro" id="IPR000014">
    <property type="entry name" value="PAS"/>
</dbReference>
<dbReference type="PANTHER" id="PTHR32089:SF112">
    <property type="entry name" value="LYSOZYME-LIKE PROTEIN-RELATED"/>
    <property type="match status" value="1"/>
</dbReference>
<dbReference type="PANTHER" id="PTHR32089">
    <property type="entry name" value="METHYL-ACCEPTING CHEMOTAXIS PROTEIN MCPB"/>
    <property type="match status" value="1"/>
</dbReference>
<dbReference type="Pfam" id="PF00015">
    <property type="entry name" value="MCPsignal"/>
    <property type="match status" value="1"/>
</dbReference>
<dbReference type="PRINTS" id="PR00260">
    <property type="entry name" value="CHEMTRNSDUCR"/>
</dbReference>
<dbReference type="SMART" id="SM00283">
    <property type="entry name" value="MA"/>
    <property type="match status" value="1"/>
</dbReference>
<dbReference type="SUPFAM" id="SSF58104">
    <property type="entry name" value="Methyl-accepting chemotaxis protein (MCP) signaling domain"/>
    <property type="match status" value="1"/>
</dbReference>
<dbReference type="PROSITE" id="PS50111">
    <property type="entry name" value="CHEMOTAXIS_TRANSDUC_2"/>
    <property type="match status" value="1"/>
</dbReference>
<dbReference type="PROSITE" id="PS50112">
    <property type="entry name" value="PAS"/>
    <property type="match status" value="1"/>
</dbReference>
<comment type="function">
    <text>Potentially involved in chemo- or phototactic signal transduction.</text>
</comment>
<comment type="subcellular location">
    <subcellularLocation>
        <location evidence="3">Cytoplasm</location>
    </subcellularLocation>
</comment>
<comment type="similarity">
    <text evidence="3">Belongs to the methyl-accepting chemotaxis (MCP) protein family.</text>
</comment>
<protein>
    <recommendedName>
        <fullName>Halobacterial transducer protein 9</fullName>
    </recommendedName>
    <alternativeName>
        <fullName>HTP III</fullName>
    </alternativeName>
</protein>
<name>HTR9_HALSA</name>
<accession>Q9HQ00</accession>
<accession>Q48316</accession>
<gene>
    <name type="primary">htr9</name>
    <name type="synonym">htpIII</name>
    <name type="ordered locus">VNG_1395G</name>
</gene>
<keyword id="KW-0145">Chemotaxis</keyword>
<keyword id="KW-0963">Cytoplasm</keyword>
<keyword id="KW-1185">Reference proteome</keyword>
<keyword id="KW-0807">Transducer</keyword>
<organism>
    <name type="scientific">Halobacterium salinarum (strain ATCC 700922 / JCM 11081 / NRC-1)</name>
    <name type="common">Halobacterium halobium</name>
    <dbReference type="NCBI Taxonomy" id="64091"/>
    <lineage>
        <taxon>Archaea</taxon>
        <taxon>Methanobacteriati</taxon>
        <taxon>Methanobacteriota</taxon>
        <taxon>Stenosarchaea group</taxon>
        <taxon>Halobacteria</taxon>
        <taxon>Halobacteriales</taxon>
        <taxon>Halobacteriaceae</taxon>
        <taxon>Halobacterium</taxon>
        <taxon>Halobacterium salinarum NRC-34001</taxon>
    </lineage>
</organism>
<sequence length="481" mass="50774">MSKNKHELGSPFTVPLLLNTLDVPAFAVDADGAVVAWDDQIAALLETAPEDAIGVTDIGERLNDDGSRALANKVADTPIDAHHEYDGVGLADESYALLTGDYVYEDTTVAGNTDLWFIATPVYHTGEFRGVIEIVQDRSSSARYQSELQALFGELVDTLDAYDAGRFDATVDIAAEDTLLDDEYIQIGRNLTEFGDTLAAHITEVHNDVERLEAASQAVSESSAEIDELSTAQSTNVSTVATEVETLSATVQEIASTADEVVDTSATAERLADDGSAAASDAADMMADVATAADSVTSDVEALQNRIEDIDEVVDVITGIAEQTNMLALNASIEAARAGEEGEGFAVVAEEVKALAEDAQSNAGHIESLVSEIQRDTADTVTDLVTTTDRIEDAVAQVEDAMASFEEIVTAVEATAEGIEQVSDATNEQAASAEEIAAMVDETADLADDITTAVADIVSQTEAQSAMLHDLDESVSELHDQ</sequence>